<reference key="1">
    <citation type="journal article" date="2008" name="J. Bacteriol.">
        <title>Genome sequence of Lactobacillus helveticus: an organism distinguished by selective gene loss and IS element expansion.</title>
        <authorList>
            <person name="Callanan M."/>
            <person name="Kaleta P."/>
            <person name="O'Callaghan J."/>
            <person name="O'Sullivan O."/>
            <person name="Jordan K."/>
            <person name="McAuliffe O."/>
            <person name="Sangrador-Vegas A."/>
            <person name="Slattery L."/>
            <person name="Fitzgerald G.F."/>
            <person name="Beresford T."/>
            <person name="Ross R.P."/>
        </authorList>
    </citation>
    <scope>NUCLEOTIDE SEQUENCE [LARGE SCALE GENOMIC DNA]</scope>
    <source>
        <strain>DPC 4571</strain>
    </source>
</reference>
<proteinExistence type="inferred from homology"/>
<dbReference type="EMBL" id="CP000517">
    <property type="protein sequence ID" value="ABX27130.1"/>
    <property type="molecule type" value="Genomic_DNA"/>
</dbReference>
<dbReference type="RefSeq" id="WP_003626511.1">
    <property type="nucleotide sequence ID" value="NC_010080.1"/>
</dbReference>
<dbReference type="SMR" id="A8YV42"/>
<dbReference type="KEGG" id="lhe:lhv_1069"/>
<dbReference type="eggNOG" id="COG4479">
    <property type="taxonomic scope" value="Bacteria"/>
</dbReference>
<dbReference type="HOGENOM" id="CLU_177534_1_0_9"/>
<dbReference type="Proteomes" id="UP000000790">
    <property type="component" value="Chromosome"/>
</dbReference>
<dbReference type="Gene3D" id="1.10.150.260">
    <property type="entry name" value="YozE SAM-like"/>
    <property type="match status" value="1"/>
</dbReference>
<dbReference type="HAMAP" id="MF_01538">
    <property type="entry name" value="UPF0346"/>
    <property type="match status" value="1"/>
</dbReference>
<dbReference type="InterPro" id="IPR010673">
    <property type="entry name" value="UPF0346"/>
</dbReference>
<dbReference type="InterPro" id="IPR023089">
    <property type="entry name" value="YozE_SAM-like"/>
</dbReference>
<dbReference type="InterPro" id="IPR036806">
    <property type="entry name" value="YozE_SAM-like_sf"/>
</dbReference>
<dbReference type="NCBIfam" id="NF010193">
    <property type="entry name" value="PRK13672.1"/>
    <property type="match status" value="1"/>
</dbReference>
<dbReference type="Pfam" id="PF06855">
    <property type="entry name" value="YozE_SAM_like"/>
    <property type="match status" value="1"/>
</dbReference>
<dbReference type="PIRSF" id="PIRSF037262">
    <property type="entry name" value="UCP037262"/>
    <property type="match status" value="1"/>
</dbReference>
<dbReference type="SUPFAM" id="SSF140652">
    <property type="entry name" value="YozE-like"/>
    <property type="match status" value="1"/>
</dbReference>
<organism>
    <name type="scientific">Lactobacillus helveticus (strain DPC 4571)</name>
    <dbReference type="NCBI Taxonomy" id="405566"/>
    <lineage>
        <taxon>Bacteria</taxon>
        <taxon>Bacillati</taxon>
        <taxon>Bacillota</taxon>
        <taxon>Bacilli</taxon>
        <taxon>Lactobacillales</taxon>
        <taxon>Lactobacillaceae</taxon>
        <taxon>Lactobacillus</taxon>
    </lineage>
</organism>
<feature type="chain" id="PRO_1000073549" description="UPF0346 protein lhv_1069">
    <location>
        <begin position="1"/>
        <end position="76"/>
    </location>
</feature>
<evidence type="ECO:0000255" key="1">
    <source>
        <dbReference type="HAMAP-Rule" id="MF_01538"/>
    </source>
</evidence>
<sequence length="76" mass="9328">MAYRESFYRYLMTQRDADSSDEIAQFANNAQHDLTFPKQEQDYEKLSDYLELNASYLPSMYIFDRAYRMYEDKMMY</sequence>
<comment type="similarity">
    <text evidence="1">Belongs to the UPF0346 family.</text>
</comment>
<gene>
    <name type="ordered locus">lhv_1069</name>
</gene>
<accession>A8YV42</accession>
<name>Y1069_LACH4</name>
<protein>
    <recommendedName>
        <fullName evidence="1">UPF0346 protein lhv_1069</fullName>
    </recommendedName>
</protein>